<protein>
    <recommendedName>
        <fullName evidence="1">UDP-N-acetylglucosamine--N-acetylmuramyl-(pentapeptide) pyrophosphoryl-undecaprenol N-acetylglucosamine transferase</fullName>
        <ecNumber evidence="1">2.4.1.227</ecNumber>
    </recommendedName>
    <alternativeName>
        <fullName evidence="1">Undecaprenyl-PP-MurNAc-pentapeptide-UDPGlcNAc GlcNAc transferase</fullName>
    </alternativeName>
</protein>
<gene>
    <name evidence="1" type="primary">murG</name>
    <name type="ordered locus">CPE2063</name>
</gene>
<sequence>MKKYKIIMTGGGSAGHVTPNLALVPKLKELGFEIKYIGSKNGIEKEIITKENIPYYSISSGKLRRYFDIKNFTDPFKVLKGVMDASRILSKEKPDVIFSKGGFVTVPVVIAASMKKIPVVSHESDLTPGLANKIASPFCDTLCVTFPESLKYIKDNKGELTGTPIREDLLKGDKERGRKFCNFKENKKVLMIIGGSLGSKVINESVRKILNEILKEYNVIHLCGKGNLDESLKNLDGYRQYEYISEELPDLMALADLVISRAGANTIFELLALRKLNILIPLSANASRGDQVLNANSFEKSGYSMVIKEEELNSELLLKSIKDLEKNREKYLNSMKMSKIGNGVNNIIDIIKKSAHM</sequence>
<dbReference type="EC" id="2.4.1.227" evidence="1"/>
<dbReference type="EMBL" id="BA000016">
    <property type="protein sequence ID" value="BAB81769.1"/>
    <property type="molecule type" value="Genomic_DNA"/>
</dbReference>
<dbReference type="RefSeq" id="WP_003451085.1">
    <property type="nucleotide sequence ID" value="NC_003366.1"/>
</dbReference>
<dbReference type="SMR" id="Q8XIQ1"/>
<dbReference type="STRING" id="195102.gene:10491333"/>
<dbReference type="CAZy" id="GT28">
    <property type="family name" value="Glycosyltransferase Family 28"/>
</dbReference>
<dbReference type="KEGG" id="cpe:CPE2063"/>
<dbReference type="HOGENOM" id="CLU_037404_0_0_9"/>
<dbReference type="UniPathway" id="UPA00219"/>
<dbReference type="Proteomes" id="UP000000818">
    <property type="component" value="Chromosome"/>
</dbReference>
<dbReference type="GO" id="GO:0005886">
    <property type="term" value="C:plasma membrane"/>
    <property type="evidence" value="ECO:0007669"/>
    <property type="project" value="UniProtKB-SubCell"/>
</dbReference>
<dbReference type="GO" id="GO:0051991">
    <property type="term" value="F:UDP-N-acetyl-D-glucosamine:N-acetylmuramoyl-L-alanyl-D-glutamyl-meso-2,6-diaminopimelyl-D-alanyl-D-alanine-diphosphoundecaprenol 4-beta-N-acetylglucosaminlytransferase activity"/>
    <property type="evidence" value="ECO:0007669"/>
    <property type="project" value="RHEA"/>
</dbReference>
<dbReference type="GO" id="GO:0050511">
    <property type="term" value="F:undecaprenyldiphospho-muramoylpentapeptide beta-N-acetylglucosaminyltransferase activity"/>
    <property type="evidence" value="ECO:0007669"/>
    <property type="project" value="UniProtKB-UniRule"/>
</dbReference>
<dbReference type="GO" id="GO:0005975">
    <property type="term" value="P:carbohydrate metabolic process"/>
    <property type="evidence" value="ECO:0007669"/>
    <property type="project" value="InterPro"/>
</dbReference>
<dbReference type="GO" id="GO:0051301">
    <property type="term" value="P:cell division"/>
    <property type="evidence" value="ECO:0007669"/>
    <property type="project" value="UniProtKB-KW"/>
</dbReference>
<dbReference type="GO" id="GO:0071555">
    <property type="term" value="P:cell wall organization"/>
    <property type="evidence" value="ECO:0007669"/>
    <property type="project" value="UniProtKB-KW"/>
</dbReference>
<dbReference type="GO" id="GO:0030259">
    <property type="term" value="P:lipid glycosylation"/>
    <property type="evidence" value="ECO:0007669"/>
    <property type="project" value="UniProtKB-UniRule"/>
</dbReference>
<dbReference type="GO" id="GO:0009252">
    <property type="term" value="P:peptidoglycan biosynthetic process"/>
    <property type="evidence" value="ECO:0007669"/>
    <property type="project" value="UniProtKB-UniRule"/>
</dbReference>
<dbReference type="GO" id="GO:0008360">
    <property type="term" value="P:regulation of cell shape"/>
    <property type="evidence" value="ECO:0007669"/>
    <property type="project" value="UniProtKB-KW"/>
</dbReference>
<dbReference type="CDD" id="cd03785">
    <property type="entry name" value="GT28_MurG"/>
    <property type="match status" value="1"/>
</dbReference>
<dbReference type="Gene3D" id="3.40.50.2000">
    <property type="entry name" value="Glycogen Phosphorylase B"/>
    <property type="match status" value="2"/>
</dbReference>
<dbReference type="HAMAP" id="MF_00033">
    <property type="entry name" value="MurG"/>
    <property type="match status" value="1"/>
</dbReference>
<dbReference type="InterPro" id="IPR006009">
    <property type="entry name" value="GlcNAc_MurG"/>
</dbReference>
<dbReference type="InterPro" id="IPR007235">
    <property type="entry name" value="Glyco_trans_28_C"/>
</dbReference>
<dbReference type="InterPro" id="IPR004276">
    <property type="entry name" value="GlycoTrans_28_N"/>
</dbReference>
<dbReference type="NCBIfam" id="TIGR01133">
    <property type="entry name" value="murG"/>
    <property type="match status" value="1"/>
</dbReference>
<dbReference type="NCBIfam" id="NF009102">
    <property type="entry name" value="PRK12446.1"/>
    <property type="match status" value="1"/>
</dbReference>
<dbReference type="PANTHER" id="PTHR21015:SF27">
    <property type="entry name" value="UDP-N-ACETYLGLUCOSAMINE--N-ACETYLMURAMYL-(PENTAPEPTIDE) PYROPHOSPHORYL-UNDECAPRENOL N-ACETYLGLUCOSAMINE TRANSFERASE"/>
    <property type="match status" value="1"/>
</dbReference>
<dbReference type="PANTHER" id="PTHR21015">
    <property type="entry name" value="UDP-N-ACETYLGLUCOSAMINE--N-ACETYLMURAMYL-(PENTAPEPTIDE) PYROPHOSPHORYL-UNDECAPRENOL N-ACETYLGLUCOSAMINE TRANSFERASE 1"/>
    <property type="match status" value="1"/>
</dbReference>
<dbReference type="Pfam" id="PF04101">
    <property type="entry name" value="Glyco_tran_28_C"/>
    <property type="match status" value="1"/>
</dbReference>
<dbReference type="Pfam" id="PF03033">
    <property type="entry name" value="Glyco_transf_28"/>
    <property type="match status" value="1"/>
</dbReference>
<dbReference type="SUPFAM" id="SSF53756">
    <property type="entry name" value="UDP-Glycosyltransferase/glycogen phosphorylase"/>
    <property type="match status" value="1"/>
</dbReference>
<comment type="function">
    <text evidence="1">Cell wall formation. Catalyzes the transfer of a GlcNAc subunit on undecaprenyl-pyrophosphoryl-MurNAc-pentapeptide (lipid intermediate I) to form undecaprenyl-pyrophosphoryl-MurNAc-(pentapeptide)GlcNAc (lipid intermediate II).</text>
</comment>
<comment type="catalytic activity">
    <reaction evidence="1">
        <text>di-trans,octa-cis-undecaprenyl diphospho-N-acetyl-alpha-D-muramoyl-L-alanyl-D-glutamyl-meso-2,6-diaminopimeloyl-D-alanyl-D-alanine + UDP-N-acetyl-alpha-D-glucosamine = di-trans,octa-cis-undecaprenyl diphospho-[N-acetyl-alpha-D-glucosaminyl-(1-&gt;4)]-N-acetyl-alpha-D-muramoyl-L-alanyl-D-glutamyl-meso-2,6-diaminopimeloyl-D-alanyl-D-alanine + UDP + H(+)</text>
        <dbReference type="Rhea" id="RHEA:31227"/>
        <dbReference type="ChEBI" id="CHEBI:15378"/>
        <dbReference type="ChEBI" id="CHEBI:57705"/>
        <dbReference type="ChEBI" id="CHEBI:58223"/>
        <dbReference type="ChEBI" id="CHEBI:61387"/>
        <dbReference type="ChEBI" id="CHEBI:61388"/>
        <dbReference type="EC" id="2.4.1.227"/>
    </reaction>
</comment>
<comment type="pathway">
    <text evidence="1">Cell wall biogenesis; peptidoglycan biosynthesis.</text>
</comment>
<comment type="subcellular location">
    <subcellularLocation>
        <location evidence="1">Cell membrane</location>
        <topology evidence="1">Peripheral membrane protein</topology>
        <orientation evidence="1">Cytoplasmic side</orientation>
    </subcellularLocation>
</comment>
<comment type="similarity">
    <text evidence="1">Belongs to the glycosyltransferase 28 family. MurG subfamily.</text>
</comment>
<organism>
    <name type="scientific">Clostridium perfringens (strain 13 / Type A)</name>
    <dbReference type="NCBI Taxonomy" id="195102"/>
    <lineage>
        <taxon>Bacteria</taxon>
        <taxon>Bacillati</taxon>
        <taxon>Bacillota</taxon>
        <taxon>Clostridia</taxon>
        <taxon>Eubacteriales</taxon>
        <taxon>Clostridiaceae</taxon>
        <taxon>Clostridium</taxon>
    </lineage>
</organism>
<reference key="1">
    <citation type="journal article" date="2002" name="Proc. Natl. Acad. Sci. U.S.A.">
        <title>Complete genome sequence of Clostridium perfringens, an anaerobic flesh-eater.</title>
        <authorList>
            <person name="Shimizu T."/>
            <person name="Ohtani K."/>
            <person name="Hirakawa H."/>
            <person name="Ohshima K."/>
            <person name="Yamashita A."/>
            <person name="Shiba T."/>
            <person name="Ogasawara N."/>
            <person name="Hattori M."/>
            <person name="Kuhara S."/>
            <person name="Hayashi H."/>
        </authorList>
    </citation>
    <scope>NUCLEOTIDE SEQUENCE [LARGE SCALE GENOMIC DNA]</scope>
    <source>
        <strain>13 / Type A</strain>
    </source>
</reference>
<keyword id="KW-0131">Cell cycle</keyword>
<keyword id="KW-0132">Cell division</keyword>
<keyword id="KW-1003">Cell membrane</keyword>
<keyword id="KW-0133">Cell shape</keyword>
<keyword id="KW-0961">Cell wall biogenesis/degradation</keyword>
<keyword id="KW-0328">Glycosyltransferase</keyword>
<keyword id="KW-0472">Membrane</keyword>
<keyword id="KW-0573">Peptidoglycan synthesis</keyword>
<keyword id="KW-1185">Reference proteome</keyword>
<keyword id="KW-0808">Transferase</keyword>
<evidence type="ECO:0000255" key="1">
    <source>
        <dbReference type="HAMAP-Rule" id="MF_00033"/>
    </source>
</evidence>
<feature type="chain" id="PRO_0000109165" description="UDP-N-acetylglucosamine--N-acetylmuramyl-(pentapeptide) pyrophosphoryl-undecaprenol N-acetylglucosamine transferase">
    <location>
        <begin position="1"/>
        <end position="357"/>
    </location>
</feature>
<feature type="binding site" evidence="1">
    <location>
        <begin position="13"/>
        <end position="15"/>
    </location>
    <ligand>
        <name>UDP-N-acetyl-alpha-D-glucosamine</name>
        <dbReference type="ChEBI" id="CHEBI:57705"/>
    </ligand>
</feature>
<feature type="binding site" evidence="1">
    <location>
        <position position="166"/>
    </location>
    <ligand>
        <name>UDP-N-acetyl-alpha-D-glucosamine</name>
        <dbReference type="ChEBI" id="CHEBI:57705"/>
    </ligand>
</feature>
<feature type="binding site" evidence="1">
    <location>
        <position position="196"/>
    </location>
    <ligand>
        <name>UDP-N-acetyl-alpha-D-glucosamine</name>
        <dbReference type="ChEBI" id="CHEBI:57705"/>
    </ligand>
</feature>
<feature type="binding site" evidence="1">
    <location>
        <position position="291"/>
    </location>
    <ligand>
        <name>UDP-N-acetyl-alpha-D-glucosamine</name>
        <dbReference type="ChEBI" id="CHEBI:57705"/>
    </ligand>
</feature>
<name>MURG_CLOPE</name>
<proteinExistence type="inferred from homology"/>
<accession>Q8XIQ1</accession>